<keyword id="KW-0119">Carbohydrate metabolism</keyword>
<keyword id="KW-0378">Hydrolase</keyword>
<sequence>MKIIRVQDQIEGGKIAFTLLKDSLAKGAKTLGLATGSSPISFYQEMVKSPLDFSDLTSINLDEYVGLSVESDQSYDYFMRQNLFNAKPFKKNYLPNGLATDIEAEAKRYDQIIAEHPIDFQVLGIGRNGHIGFNEPGTSFEEETHVVDLQESTIEANSRFFTSIEDVPKQAISMGIASIMKSKMIVLLAFGQEKADAIKGMVFGPITEDLPASILQKHDHVIVIVDEAAASQLD</sequence>
<reference key="1">
    <citation type="journal article" date="2002" name="Proc. Natl. Acad. Sci. U.S.A.">
        <title>Genome sequence of a serotype M3 strain of group A Streptococcus: phage-encoded toxins, the high-virulence phenotype, and clone emergence.</title>
        <authorList>
            <person name="Beres S.B."/>
            <person name="Sylva G.L."/>
            <person name="Barbian K.D."/>
            <person name="Lei B."/>
            <person name="Hoff J.S."/>
            <person name="Mammarella N.D."/>
            <person name="Liu M.-Y."/>
            <person name="Smoot J.C."/>
            <person name="Porcella S.F."/>
            <person name="Parkins L.D."/>
            <person name="Campbell D.S."/>
            <person name="Smith T.M."/>
            <person name="McCormick J.K."/>
            <person name="Leung D.Y.M."/>
            <person name="Schlievert P.M."/>
            <person name="Musser J.M."/>
        </authorList>
    </citation>
    <scope>NUCLEOTIDE SEQUENCE [LARGE SCALE GENOMIC DNA]</scope>
    <source>
        <strain>ATCC BAA-595 / MGAS315</strain>
    </source>
</reference>
<dbReference type="EC" id="3.5.99.6" evidence="1"/>
<dbReference type="EMBL" id="AE014074">
    <property type="protein sequence ID" value="AAM79672.1"/>
    <property type="molecule type" value="Genomic_DNA"/>
</dbReference>
<dbReference type="RefSeq" id="WP_002995779.1">
    <property type="nucleotide sequence ID" value="NC_004070.1"/>
</dbReference>
<dbReference type="SMR" id="P0DC66"/>
<dbReference type="GeneID" id="69900642"/>
<dbReference type="KEGG" id="spg:SpyM3_1065"/>
<dbReference type="HOGENOM" id="CLU_049611_1_0_9"/>
<dbReference type="UniPathway" id="UPA00629">
    <property type="reaction ID" value="UER00684"/>
</dbReference>
<dbReference type="Proteomes" id="UP000000564">
    <property type="component" value="Chromosome"/>
</dbReference>
<dbReference type="GO" id="GO:0005737">
    <property type="term" value="C:cytoplasm"/>
    <property type="evidence" value="ECO:0007669"/>
    <property type="project" value="TreeGrafter"/>
</dbReference>
<dbReference type="GO" id="GO:0004342">
    <property type="term" value="F:glucosamine-6-phosphate deaminase activity"/>
    <property type="evidence" value="ECO:0007669"/>
    <property type="project" value="UniProtKB-UniRule"/>
</dbReference>
<dbReference type="GO" id="GO:0042802">
    <property type="term" value="F:identical protein binding"/>
    <property type="evidence" value="ECO:0007669"/>
    <property type="project" value="TreeGrafter"/>
</dbReference>
<dbReference type="GO" id="GO:0005975">
    <property type="term" value="P:carbohydrate metabolic process"/>
    <property type="evidence" value="ECO:0007669"/>
    <property type="project" value="InterPro"/>
</dbReference>
<dbReference type="GO" id="GO:0006043">
    <property type="term" value="P:glucosamine catabolic process"/>
    <property type="evidence" value="ECO:0007669"/>
    <property type="project" value="TreeGrafter"/>
</dbReference>
<dbReference type="GO" id="GO:0006046">
    <property type="term" value="P:N-acetylglucosamine catabolic process"/>
    <property type="evidence" value="ECO:0007669"/>
    <property type="project" value="TreeGrafter"/>
</dbReference>
<dbReference type="GO" id="GO:0019262">
    <property type="term" value="P:N-acetylneuraminate catabolic process"/>
    <property type="evidence" value="ECO:0007669"/>
    <property type="project" value="UniProtKB-UniRule"/>
</dbReference>
<dbReference type="CDD" id="cd01399">
    <property type="entry name" value="GlcN6P_deaminase"/>
    <property type="match status" value="1"/>
</dbReference>
<dbReference type="FunFam" id="3.40.50.1360:FF:000003">
    <property type="entry name" value="Glucosamine-6-phosphate deaminase"/>
    <property type="match status" value="1"/>
</dbReference>
<dbReference type="Gene3D" id="3.40.50.1360">
    <property type="match status" value="1"/>
</dbReference>
<dbReference type="HAMAP" id="MF_01241">
    <property type="entry name" value="GlcN6P_deamin"/>
    <property type="match status" value="1"/>
</dbReference>
<dbReference type="InterPro" id="IPR006148">
    <property type="entry name" value="Glc/Gal-6P_isomerase"/>
</dbReference>
<dbReference type="InterPro" id="IPR004547">
    <property type="entry name" value="Glucosamine6P_isomerase"/>
</dbReference>
<dbReference type="InterPro" id="IPR018321">
    <property type="entry name" value="Glucosamine6P_isomerase_CS"/>
</dbReference>
<dbReference type="InterPro" id="IPR037171">
    <property type="entry name" value="NagB/RpiA_transferase-like"/>
</dbReference>
<dbReference type="NCBIfam" id="TIGR00502">
    <property type="entry name" value="nagB"/>
    <property type="match status" value="1"/>
</dbReference>
<dbReference type="PANTHER" id="PTHR11280">
    <property type="entry name" value="GLUCOSAMINE-6-PHOSPHATE ISOMERASE"/>
    <property type="match status" value="1"/>
</dbReference>
<dbReference type="PANTHER" id="PTHR11280:SF5">
    <property type="entry name" value="GLUCOSAMINE-6-PHOSPHATE ISOMERASE"/>
    <property type="match status" value="1"/>
</dbReference>
<dbReference type="Pfam" id="PF01182">
    <property type="entry name" value="Glucosamine_iso"/>
    <property type="match status" value="1"/>
</dbReference>
<dbReference type="SUPFAM" id="SSF100950">
    <property type="entry name" value="NagB/RpiA/CoA transferase-like"/>
    <property type="match status" value="1"/>
</dbReference>
<dbReference type="PROSITE" id="PS01161">
    <property type="entry name" value="GLC_GALNAC_ISOMERASE"/>
    <property type="match status" value="1"/>
</dbReference>
<organism>
    <name type="scientific">Streptococcus pyogenes serotype M3 (strain ATCC BAA-595 / MGAS315)</name>
    <dbReference type="NCBI Taxonomy" id="198466"/>
    <lineage>
        <taxon>Bacteria</taxon>
        <taxon>Bacillati</taxon>
        <taxon>Bacillota</taxon>
        <taxon>Bacilli</taxon>
        <taxon>Lactobacillales</taxon>
        <taxon>Streptococcaceae</taxon>
        <taxon>Streptococcus</taxon>
    </lineage>
</organism>
<protein>
    <recommendedName>
        <fullName evidence="1">Glucosamine-6-phosphate deaminase</fullName>
        <ecNumber evidence="1">3.5.99.6</ecNumber>
    </recommendedName>
    <alternativeName>
        <fullName evidence="1">GlcN6P deaminase</fullName>
        <shortName evidence="1">GNPDA</shortName>
    </alternativeName>
    <alternativeName>
        <fullName evidence="1">Glucosamine-6-phosphate isomerase</fullName>
    </alternativeName>
</protein>
<feature type="chain" id="PRO_0000160180" description="Glucosamine-6-phosphate deaminase">
    <location>
        <begin position="1"/>
        <end position="234"/>
    </location>
</feature>
<feature type="active site" description="Proton acceptor; for enolization step" evidence="1">
    <location>
        <position position="62"/>
    </location>
</feature>
<feature type="active site" description="For ring-opening step" evidence="1">
    <location>
        <position position="128"/>
    </location>
</feature>
<feature type="active site" description="Proton acceptor; for ring-opening step" evidence="1">
    <location>
        <position position="130"/>
    </location>
</feature>
<feature type="active site" description="For ring-opening step" evidence="1">
    <location>
        <position position="135"/>
    </location>
</feature>
<comment type="function">
    <text evidence="1">Catalyzes the reversible isomerization-deamination of glucosamine 6-phosphate (GlcN6P) to form fructose 6-phosphate (Fru6P) and ammonium ion.</text>
</comment>
<comment type="catalytic activity">
    <reaction evidence="1">
        <text>alpha-D-glucosamine 6-phosphate + H2O = beta-D-fructose 6-phosphate + NH4(+)</text>
        <dbReference type="Rhea" id="RHEA:12172"/>
        <dbReference type="ChEBI" id="CHEBI:15377"/>
        <dbReference type="ChEBI" id="CHEBI:28938"/>
        <dbReference type="ChEBI" id="CHEBI:57634"/>
        <dbReference type="ChEBI" id="CHEBI:75989"/>
        <dbReference type="EC" id="3.5.99.6"/>
    </reaction>
</comment>
<comment type="pathway">
    <text evidence="1">Amino-sugar metabolism; N-acetylneuraminate degradation; D-fructose 6-phosphate from N-acetylneuraminate: step 5/5.</text>
</comment>
<comment type="similarity">
    <text evidence="1">Belongs to the glucosamine/galactosamine-6-phosphate isomerase family. NagB subfamily.</text>
</comment>
<name>NAGB_STRP3</name>
<evidence type="ECO:0000255" key="1">
    <source>
        <dbReference type="HAMAP-Rule" id="MF_01241"/>
    </source>
</evidence>
<accession>P0DC66</accession>
<accession>Q8K6Z4</accession>
<proteinExistence type="inferred from homology"/>
<gene>
    <name evidence="1" type="primary">nagB</name>
    <name type="ordered locus">SpyM3_1065</name>
</gene>